<sequence length="237" mass="27319">MKKQNIPEEILSLITEEEINLFQELQIKIKELNNKTNLTRLTDGDDYWVSQVFDSIWPFKAFTNINFDNKKFLDIGSGCGFPGLAYAITHPNSEIYLIDSLKKKTDAIKFLVKQINFKNNIHVINDRVENLAHQSSMRNNFNIATTRAVSNPSTVSEYILPMLKKEGFGVLYCGKWTNEESKNLDKTLEILEGKVKDKKEIQLPRNKGTRNIILIQPKNFCPEIYPRKVGKPEKNPL</sequence>
<evidence type="ECO:0000255" key="1">
    <source>
        <dbReference type="HAMAP-Rule" id="MF_00074"/>
    </source>
</evidence>
<organism>
    <name type="scientific">Prochlorococcus marinus (strain MIT 9215)</name>
    <dbReference type="NCBI Taxonomy" id="93060"/>
    <lineage>
        <taxon>Bacteria</taxon>
        <taxon>Bacillati</taxon>
        <taxon>Cyanobacteriota</taxon>
        <taxon>Cyanophyceae</taxon>
        <taxon>Synechococcales</taxon>
        <taxon>Prochlorococcaceae</taxon>
        <taxon>Prochlorococcus</taxon>
    </lineage>
</organism>
<name>RSMG_PROM2</name>
<proteinExistence type="inferred from homology"/>
<keyword id="KW-0963">Cytoplasm</keyword>
<keyword id="KW-0489">Methyltransferase</keyword>
<keyword id="KW-0698">rRNA processing</keyword>
<keyword id="KW-0949">S-adenosyl-L-methionine</keyword>
<keyword id="KW-0808">Transferase</keyword>
<reference key="1">
    <citation type="journal article" date="2007" name="PLoS Genet.">
        <title>Patterns and implications of gene gain and loss in the evolution of Prochlorococcus.</title>
        <authorList>
            <person name="Kettler G.C."/>
            <person name="Martiny A.C."/>
            <person name="Huang K."/>
            <person name="Zucker J."/>
            <person name="Coleman M.L."/>
            <person name="Rodrigue S."/>
            <person name="Chen F."/>
            <person name="Lapidus A."/>
            <person name="Ferriera S."/>
            <person name="Johnson J."/>
            <person name="Steglich C."/>
            <person name="Church G.M."/>
            <person name="Richardson P."/>
            <person name="Chisholm S.W."/>
        </authorList>
    </citation>
    <scope>NUCLEOTIDE SEQUENCE [LARGE SCALE GENOMIC DNA]</scope>
    <source>
        <strain>MIT 9215</strain>
    </source>
</reference>
<comment type="function">
    <text evidence="1">Specifically methylates the N7 position of a guanine in 16S rRNA.</text>
</comment>
<comment type="subcellular location">
    <subcellularLocation>
        <location evidence="1">Cytoplasm</location>
    </subcellularLocation>
</comment>
<comment type="similarity">
    <text evidence="1">Belongs to the methyltransferase superfamily. RNA methyltransferase RsmG family.</text>
</comment>
<feature type="chain" id="PRO_1000057510" description="Ribosomal RNA small subunit methyltransferase G">
    <location>
        <begin position="1"/>
        <end position="237"/>
    </location>
</feature>
<feature type="binding site" evidence="1">
    <location>
        <position position="76"/>
    </location>
    <ligand>
        <name>S-adenosyl-L-methionine</name>
        <dbReference type="ChEBI" id="CHEBI:59789"/>
    </ligand>
</feature>
<feature type="binding site" evidence="1">
    <location>
        <position position="81"/>
    </location>
    <ligand>
        <name>S-adenosyl-L-methionine</name>
        <dbReference type="ChEBI" id="CHEBI:59789"/>
    </ligand>
</feature>
<feature type="binding site" evidence="1">
    <location>
        <begin position="128"/>
        <end position="129"/>
    </location>
    <ligand>
        <name>S-adenosyl-L-methionine</name>
        <dbReference type="ChEBI" id="CHEBI:59789"/>
    </ligand>
</feature>
<feature type="binding site" evidence="1">
    <location>
        <position position="147"/>
    </location>
    <ligand>
        <name>S-adenosyl-L-methionine</name>
        <dbReference type="ChEBI" id="CHEBI:59789"/>
    </ligand>
</feature>
<dbReference type="EC" id="2.1.1.-" evidence="1"/>
<dbReference type="EMBL" id="CP000825">
    <property type="protein sequence ID" value="ABV51356.1"/>
    <property type="molecule type" value="Genomic_DNA"/>
</dbReference>
<dbReference type="RefSeq" id="WP_012008375.1">
    <property type="nucleotide sequence ID" value="NC_009840.1"/>
</dbReference>
<dbReference type="SMR" id="A8G6X5"/>
<dbReference type="STRING" id="93060.P9215_17431"/>
<dbReference type="KEGG" id="pmh:P9215_17431"/>
<dbReference type="eggNOG" id="COG0357">
    <property type="taxonomic scope" value="Bacteria"/>
</dbReference>
<dbReference type="HOGENOM" id="CLU_065341_0_2_3"/>
<dbReference type="OrthoDB" id="9808773at2"/>
<dbReference type="Proteomes" id="UP000002014">
    <property type="component" value="Chromosome"/>
</dbReference>
<dbReference type="GO" id="GO:0005829">
    <property type="term" value="C:cytosol"/>
    <property type="evidence" value="ECO:0007669"/>
    <property type="project" value="TreeGrafter"/>
</dbReference>
<dbReference type="GO" id="GO:0070043">
    <property type="term" value="F:rRNA (guanine-N7-)-methyltransferase activity"/>
    <property type="evidence" value="ECO:0007669"/>
    <property type="project" value="UniProtKB-UniRule"/>
</dbReference>
<dbReference type="Gene3D" id="3.40.50.150">
    <property type="entry name" value="Vaccinia Virus protein VP39"/>
    <property type="match status" value="1"/>
</dbReference>
<dbReference type="HAMAP" id="MF_00074">
    <property type="entry name" value="16SrRNA_methyltr_G"/>
    <property type="match status" value="1"/>
</dbReference>
<dbReference type="InterPro" id="IPR003682">
    <property type="entry name" value="rRNA_ssu_MeTfrase_G"/>
</dbReference>
<dbReference type="InterPro" id="IPR029063">
    <property type="entry name" value="SAM-dependent_MTases_sf"/>
</dbReference>
<dbReference type="NCBIfam" id="TIGR00138">
    <property type="entry name" value="rsmG_gidB"/>
    <property type="match status" value="1"/>
</dbReference>
<dbReference type="PANTHER" id="PTHR31760">
    <property type="entry name" value="S-ADENOSYL-L-METHIONINE-DEPENDENT METHYLTRANSFERASES SUPERFAMILY PROTEIN"/>
    <property type="match status" value="1"/>
</dbReference>
<dbReference type="PANTHER" id="PTHR31760:SF0">
    <property type="entry name" value="S-ADENOSYL-L-METHIONINE-DEPENDENT METHYLTRANSFERASES SUPERFAMILY PROTEIN"/>
    <property type="match status" value="1"/>
</dbReference>
<dbReference type="Pfam" id="PF02527">
    <property type="entry name" value="GidB"/>
    <property type="match status" value="1"/>
</dbReference>
<dbReference type="PIRSF" id="PIRSF003078">
    <property type="entry name" value="GidB"/>
    <property type="match status" value="1"/>
</dbReference>
<dbReference type="SUPFAM" id="SSF53335">
    <property type="entry name" value="S-adenosyl-L-methionine-dependent methyltransferases"/>
    <property type="match status" value="1"/>
</dbReference>
<protein>
    <recommendedName>
        <fullName evidence="1">Ribosomal RNA small subunit methyltransferase G</fullName>
        <ecNumber evidence="1">2.1.1.-</ecNumber>
    </recommendedName>
    <alternativeName>
        <fullName evidence="1">16S rRNA 7-methylguanosine methyltransferase</fullName>
        <shortName evidence="1">16S rRNA m7G methyltransferase</shortName>
    </alternativeName>
</protein>
<accession>A8G6X5</accession>
<gene>
    <name evidence="1" type="primary">rsmG</name>
    <name type="ordered locus">P9215_17431</name>
</gene>